<sequence length="291" mass="33464">MLKETVDGLNIKPDGVYVDVTFGGGGHSKEILSRLGPEGKLFGFDQDEDAWENALPDERFTLIQENFRYIKRFLRFNGIKKVDGILADLGVSSHQFDVPERGFSTRFDAELDMRMSKKNDLTAFNIVNEYDETNLRRIFAEYGELGNALAIARAIIEAREKEKIVNTEDLKQVLARFLPNNKAHKILAQIYQSIRIEVNQEMDVLKEFLEQSLEVLDQGGRLSVISYHSLEDRLVKRFMKNGLFEGEPEKDFFGRFEVPFKLIGKMIIPSNQEIKINNRARSAKLRIAEKK</sequence>
<comment type="function">
    <text evidence="1">Specifically methylates the N4 position of cytidine in position 1402 (C1402) of 16S rRNA.</text>
</comment>
<comment type="catalytic activity">
    <reaction evidence="1">
        <text>cytidine(1402) in 16S rRNA + S-adenosyl-L-methionine = N(4)-methylcytidine(1402) in 16S rRNA + S-adenosyl-L-homocysteine + H(+)</text>
        <dbReference type="Rhea" id="RHEA:42928"/>
        <dbReference type="Rhea" id="RHEA-COMP:10286"/>
        <dbReference type="Rhea" id="RHEA-COMP:10287"/>
        <dbReference type="ChEBI" id="CHEBI:15378"/>
        <dbReference type="ChEBI" id="CHEBI:57856"/>
        <dbReference type="ChEBI" id="CHEBI:59789"/>
        <dbReference type="ChEBI" id="CHEBI:74506"/>
        <dbReference type="ChEBI" id="CHEBI:82748"/>
        <dbReference type="EC" id="2.1.1.199"/>
    </reaction>
</comment>
<comment type="subcellular location">
    <subcellularLocation>
        <location evidence="1">Cytoplasm</location>
    </subcellularLocation>
</comment>
<comment type="similarity">
    <text evidence="1">Belongs to the methyltransferase superfamily. RsmH family.</text>
</comment>
<feature type="chain" id="PRO_0000386895" description="Ribosomal RNA small subunit methyltransferase H">
    <location>
        <begin position="1"/>
        <end position="291"/>
    </location>
</feature>
<feature type="binding site" evidence="1">
    <location>
        <begin position="25"/>
        <end position="27"/>
    </location>
    <ligand>
        <name>S-adenosyl-L-methionine</name>
        <dbReference type="ChEBI" id="CHEBI:59789"/>
    </ligand>
</feature>
<feature type="binding site" evidence="1">
    <location>
        <position position="45"/>
    </location>
    <ligand>
        <name>S-adenosyl-L-methionine</name>
        <dbReference type="ChEBI" id="CHEBI:59789"/>
    </ligand>
</feature>
<feature type="binding site" evidence="1">
    <location>
        <position position="73"/>
    </location>
    <ligand>
        <name>S-adenosyl-L-methionine</name>
        <dbReference type="ChEBI" id="CHEBI:59789"/>
    </ligand>
</feature>
<feature type="binding site" evidence="1">
    <location>
        <position position="88"/>
    </location>
    <ligand>
        <name>S-adenosyl-L-methionine</name>
        <dbReference type="ChEBI" id="CHEBI:59789"/>
    </ligand>
</feature>
<feature type="binding site" evidence="1">
    <location>
        <position position="95"/>
    </location>
    <ligand>
        <name>S-adenosyl-L-methionine</name>
        <dbReference type="ChEBI" id="CHEBI:59789"/>
    </ligand>
</feature>
<evidence type="ECO:0000255" key="1">
    <source>
        <dbReference type="HAMAP-Rule" id="MF_01007"/>
    </source>
</evidence>
<accession>A6H1A2</accession>
<keyword id="KW-0963">Cytoplasm</keyword>
<keyword id="KW-0489">Methyltransferase</keyword>
<keyword id="KW-1185">Reference proteome</keyword>
<keyword id="KW-0698">rRNA processing</keyword>
<keyword id="KW-0949">S-adenosyl-L-methionine</keyword>
<keyword id="KW-0808">Transferase</keyword>
<name>RSMH_FLAPJ</name>
<gene>
    <name evidence="1" type="primary">rsmH</name>
    <name type="synonym">mraW</name>
    <name type="ordered locus">FP2064</name>
</gene>
<protein>
    <recommendedName>
        <fullName evidence="1">Ribosomal RNA small subunit methyltransferase H</fullName>
        <ecNumber evidence="1">2.1.1.199</ecNumber>
    </recommendedName>
    <alternativeName>
        <fullName evidence="1">16S rRNA m(4)C1402 methyltransferase</fullName>
    </alternativeName>
    <alternativeName>
        <fullName evidence="1">rRNA (cytosine-N(4)-)-methyltransferase RsmH</fullName>
    </alternativeName>
</protein>
<proteinExistence type="inferred from homology"/>
<organism>
    <name type="scientific">Flavobacterium psychrophilum (strain ATCC 49511 / DSM 21280 / CIP 103535 / JIP02/86)</name>
    <dbReference type="NCBI Taxonomy" id="402612"/>
    <lineage>
        <taxon>Bacteria</taxon>
        <taxon>Pseudomonadati</taxon>
        <taxon>Bacteroidota</taxon>
        <taxon>Flavobacteriia</taxon>
        <taxon>Flavobacteriales</taxon>
        <taxon>Flavobacteriaceae</taxon>
        <taxon>Flavobacterium</taxon>
    </lineage>
</organism>
<reference key="1">
    <citation type="journal article" date="2007" name="Nat. Biotechnol.">
        <title>Complete genome sequence of the fish pathogen Flavobacterium psychrophilum.</title>
        <authorList>
            <person name="Duchaud E."/>
            <person name="Boussaha M."/>
            <person name="Loux V."/>
            <person name="Bernardet J.-F."/>
            <person name="Michel C."/>
            <person name="Kerouault B."/>
            <person name="Mondot S."/>
            <person name="Nicolas P."/>
            <person name="Bossy R."/>
            <person name="Caron C."/>
            <person name="Bessieres P."/>
            <person name="Gibrat J.-F."/>
            <person name="Claverol S."/>
            <person name="Dumetz F."/>
            <person name="Le Henaff M."/>
            <person name="Benmansour A."/>
        </authorList>
    </citation>
    <scope>NUCLEOTIDE SEQUENCE [LARGE SCALE GENOMIC DNA]</scope>
    <source>
        <strain>ATCC 49511 / DSM 21280 / CIP 103535 / JIP02/86</strain>
    </source>
</reference>
<dbReference type="EC" id="2.1.1.199" evidence="1"/>
<dbReference type="EMBL" id="AM398681">
    <property type="protein sequence ID" value="CAL44126.1"/>
    <property type="molecule type" value="Genomic_DNA"/>
</dbReference>
<dbReference type="RefSeq" id="YP_001296928.1">
    <property type="nucleotide sequence ID" value="NC_009613.3"/>
</dbReference>
<dbReference type="SMR" id="A6H1A2"/>
<dbReference type="STRING" id="402612.FP2064"/>
<dbReference type="EnsemblBacteria" id="CAL44126">
    <property type="protein sequence ID" value="CAL44126"/>
    <property type="gene ID" value="FP2064"/>
</dbReference>
<dbReference type="KEGG" id="fps:FP2064"/>
<dbReference type="PATRIC" id="fig|402612.5.peg.2091"/>
<dbReference type="eggNOG" id="COG0275">
    <property type="taxonomic scope" value="Bacteria"/>
</dbReference>
<dbReference type="HOGENOM" id="CLU_038422_2_0_10"/>
<dbReference type="OrthoDB" id="9806637at2"/>
<dbReference type="Proteomes" id="UP000006394">
    <property type="component" value="Chromosome"/>
</dbReference>
<dbReference type="GO" id="GO:0005737">
    <property type="term" value="C:cytoplasm"/>
    <property type="evidence" value="ECO:0007669"/>
    <property type="project" value="UniProtKB-SubCell"/>
</dbReference>
<dbReference type="GO" id="GO:0071424">
    <property type="term" value="F:rRNA (cytosine-N4-)-methyltransferase activity"/>
    <property type="evidence" value="ECO:0007669"/>
    <property type="project" value="UniProtKB-UniRule"/>
</dbReference>
<dbReference type="GO" id="GO:0070475">
    <property type="term" value="P:rRNA base methylation"/>
    <property type="evidence" value="ECO:0007669"/>
    <property type="project" value="UniProtKB-UniRule"/>
</dbReference>
<dbReference type="Gene3D" id="1.10.150.170">
    <property type="entry name" value="Putative methyltransferase TM0872, insert domain"/>
    <property type="match status" value="1"/>
</dbReference>
<dbReference type="Gene3D" id="3.40.50.150">
    <property type="entry name" value="Vaccinia Virus protein VP39"/>
    <property type="match status" value="1"/>
</dbReference>
<dbReference type="HAMAP" id="MF_01007">
    <property type="entry name" value="16SrRNA_methyltr_H"/>
    <property type="match status" value="1"/>
</dbReference>
<dbReference type="InterPro" id="IPR002903">
    <property type="entry name" value="RsmH"/>
</dbReference>
<dbReference type="InterPro" id="IPR023397">
    <property type="entry name" value="SAM-dep_MeTrfase_MraW_recog"/>
</dbReference>
<dbReference type="InterPro" id="IPR029063">
    <property type="entry name" value="SAM-dependent_MTases_sf"/>
</dbReference>
<dbReference type="NCBIfam" id="TIGR00006">
    <property type="entry name" value="16S rRNA (cytosine(1402)-N(4))-methyltransferase RsmH"/>
    <property type="match status" value="1"/>
</dbReference>
<dbReference type="PANTHER" id="PTHR11265:SF0">
    <property type="entry name" value="12S RRNA N4-METHYLCYTIDINE METHYLTRANSFERASE"/>
    <property type="match status" value="1"/>
</dbReference>
<dbReference type="PANTHER" id="PTHR11265">
    <property type="entry name" value="S-ADENOSYL-METHYLTRANSFERASE MRAW"/>
    <property type="match status" value="1"/>
</dbReference>
<dbReference type="Pfam" id="PF01795">
    <property type="entry name" value="Methyltransf_5"/>
    <property type="match status" value="1"/>
</dbReference>
<dbReference type="PIRSF" id="PIRSF004486">
    <property type="entry name" value="MraW"/>
    <property type="match status" value="1"/>
</dbReference>
<dbReference type="SUPFAM" id="SSF81799">
    <property type="entry name" value="Putative methyltransferase TM0872, insert domain"/>
    <property type="match status" value="1"/>
</dbReference>
<dbReference type="SUPFAM" id="SSF53335">
    <property type="entry name" value="S-adenosyl-L-methionine-dependent methyltransferases"/>
    <property type="match status" value="1"/>
</dbReference>